<evidence type="ECO:0000250" key="1"/>
<evidence type="ECO:0000255" key="2">
    <source>
        <dbReference type="PROSITE-ProRule" id="PRU00208"/>
    </source>
</evidence>
<evidence type="ECO:0000255" key="3">
    <source>
        <dbReference type="PROSITE-ProRule" id="PRU01024"/>
    </source>
</evidence>
<accession>Q8AA22</accession>
<proteinExistence type="inferred from homology"/>
<reference key="1">
    <citation type="journal article" date="2003" name="Science">
        <title>A genomic view of the human-Bacteroides thetaiotaomicron symbiosis.</title>
        <authorList>
            <person name="Xu J."/>
            <person name="Bjursell M.K."/>
            <person name="Himrod J."/>
            <person name="Deng S."/>
            <person name="Carmichael L.K."/>
            <person name="Chiang H.C."/>
            <person name="Hooper L.V."/>
            <person name="Gordon J.I."/>
        </authorList>
    </citation>
    <scope>NUCLEOTIDE SEQUENCE [LARGE SCALE GENOMIC DNA]</scope>
    <source>
        <strain>ATCC 29148 / DSM 2079 / JCM 5827 / CCUG 10774 / NCTC 10582 / VPI-5482 / E50</strain>
    </source>
</reference>
<feature type="chain" id="PRO_0000161955" description="Uncharacterized RNA methyltransferase BT_0643">
    <location>
        <begin position="1"/>
        <end position="454"/>
    </location>
</feature>
<feature type="domain" description="TRAM" evidence="2">
    <location>
        <begin position="1"/>
        <end position="45"/>
    </location>
</feature>
<feature type="active site" description="Nucleophile" evidence="3">
    <location>
        <position position="412"/>
    </location>
</feature>
<feature type="binding site" evidence="1">
    <location>
        <position position="58"/>
    </location>
    <ligand>
        <name>[4Fe-4S] cluster</name>
        <dbReference type="ChEBI" id="CHEBI:49883"/>
    </ligand>
</feature>
<feature type="binding site" evidence="1">
    <location>
        <position position="64"/>
    </location>
    <ligand>
        <name>[4Fe-4S] cluster</name>
        <dbReference type="ChEBI" id="CHEBI:49883"/>
    </ligand>
</feature>
<feature type="binding site" evidence="1">
    <location>
        <position position="67"/>
    </location>
    <ligand>
        <name>[4Fe-4S] cluster</name>
        <dbReference type="ChEBI" id="CHEBI:49883"/>
    </ligand>
</feature>
<feature type="binding site" evidence="1">
    <location>
        <position position="160"/>
    </location>
    <ligand>
        <name>[4Fe-4S] cluster</name>
        <dbReference type="ChEBI" id="CHEBI:49883"/>
    </ligand>
</feature>
<feature type="binding site" evidence="3">
    <location>
        <position position="286"/>
    </location>
    <ligand>
        <name>S-adenosyl-L-methionine</name>
        <dbReference type="ChEBI" id="CHEBI:59789"/>
    </ligand>
</feature>
<feature type="binding site" evidence="3">
    <location>
        <position position="315"/>
    </location>
    <ligand>
        <name>S-adenosyl-L-methionine</name>
        <dbReference type="ChEBI" id="CHEBI:59789"/>
    </ligand>
</feature>
<feature type="binding site" evidence="3">
    <location>
        <position position="336"/>
    </location>
    <ligand>
        <name>S-adenosyl-L-methionine</name>
        <dbReference type="ChEBI" id="CHEBI:59789"/>
    </ligand>
</feature>
<feature type="binding site" evidence="3">
    <location>
        <position position="385"/>
    </location>
    <ligand>
        <name>S-adenosyl-L-methionine</name>
        <dbReference type="ChEBI" id="CHEBI:59789"/>
    </ligand>
</feature>
<dbReference type="EC" id="2.1.1.-"/>
<dbReference type="EMBL" id="AE015928">
    <property type="protein sequence ID" value="AAO75750.1"/>
    <property type="molecule type" value="Genomic_DNA"/>
</dbReference>
<dbReference type="RefSeq" id="NP_809556.1">
    <property type="nucleotide sequence ID" value="NC_004663.1"/>
</dbReference>
<dbReference type="RefSeq" id="WP_011107369.1">
    <property type="nucleotide sequence ID" value="NC_004663.1"/>
</dbReference>
<dbReference type="SMR" id="Q8AA22"/>
<dbReference type="FunCoup" id="Q8AA22">
    <property type="interactions" value="421"/>
</dbReference>
<dbReference type="STRING" id="226186.BT_0643"/>
<dbReference type="PaxDb" id="226186-BT_0643"/>
<dbReference type="DNASU" id="1072362"/>
<dbReference type="EnsemblBacteria" id="AAO75750">
    <property type="protein sequence ID" value="AAO75750"/>
    <property type="gene ID" value="BT_0643"/>
</dbReference>
<dbReference type="GeneID" id="60926604"/>
<dbReference type="KEGG" id="bth:BT_0643"/>
<dbReference type="PATRIC" id="fig|226186.12.peg.653"/>
<dbReference type="eggNOG" id="COG2265">
    <property type="taxonomic scope" value="Bacteria"/>
</dbReference>
<dbReference type="HOGENOM" id="CLU_014689_7_2_10"/>
<dbReference type="InParanoid" id="Q8AA22"/>
<dbReference type="OrthoDB" id="9804590at2"/>
<dbReference type="Proteomes" id="UP000001414">
    <property type="component" value="Chromosome"/>
</dbReference>
<dbReference type="GO" id="GO:0051539">
    <property type="term" value="F:4 iron, 4 sulfur cluster binding"/>
    <property type="evidence" value="ECO:0007669"/>
    <property type="project" value="UniProtKB-KW"/>
</dbReference>
<dbReference type="GO" id="GO:0046872">
    <property type="term" value="F:metal ion binding"/>
    <property type="evidence" value="ECO:0007669"/>
    <property type="project" value="UniProtKB-KW"/>
</dbReference>
<dbReference type="GO" id="GO:0070041">
    <property type="term" value="F:rRNA (uridine-C5-)-methyltransferase activity"/>
    <property type="evidence" value="ECO:0000318"/>
    <property type="project" value="GO_Central"/>
</dbReference>
<dbReference type="GO" id="GO:0070475">
    <property type="term" value="P:rRNA base methylation"/>
    <property type="evidence" value="ECO:0000318"/>
    <property type="project" value="GO_Central"/>
</dbReference>
<dbReference type="CDD" id="cd02440">
    <property type="entry name" value="AdoMet_MTases"/>
    <property type="match status" value="1"/>
</dbReference>
<dbReference type="FunFam" id="3.40.50.150:FF:000009">
    <property type="entry name" value="23S rRNA (Uracil(1939)-C(5))-methyltransferase RlmD"/>
    <property type="match status" value="1"/>
</dbReference>
<dbReference type="FunFam" id="2.40.50.1070:FF:000010">
    <property type="entry name" value="23S rRNA m(5)U-1939 methyltransferase"/>
    <property type="match status" value="1"/>
</dbReference>
<dbReference type="Gene3D" id="2.40.50.1070">
    <property type="match status" value="1"/>
</dbReference>
<dbReference type="Gene3D" id="2.40.50.140">
    <property type="entry name" value="Nucleic acid-binding proteins"/>
    <property type="match status" value="1"/>
</dbReference>
<dbReference type="Gene3D" id="3.40.50.150">
    <property type="entry name" value="Vaccinia Virus protein VP39"/>
    <property type="match status" value="1"/>
</dbReference>
<dbReference type="InterPro" id="IPR030390">
    <property type="entry name" value="MeTrfase_TrmA_AS"/>
</dbReference>
<dbReference type="InterPro" id="IPR030391">
    <property type="entry name" value="MeTrfase_TrmA_CS"/>
</dbReference>
<dbReference type="InterPro" id="IPR012340">
    <property type="entry name" value="NA-bd_OB-fold"/>
</dbReference>
<dbReference type="InterPro" id="IPR029063">
    <property type="entry name" value="SAM-dependent_MTases_sf"/>
</dbReference>
<dbReference type="InterPro" id="IPR002792">
    <property type="entry name" value="TRAM_dom"/>
</dbReference>
<dbReference type="InterPro" id="IPR010280">
    <property type="entry name" value="U5_MeTrfase_fam"/>
</dbReference>
<dbReference type="NCBIfam" id="TIGR00479">
    <property type="entry name" value="rumA"/>
    <property type="match status" value="1"/>
</dbReference>
<dbReference type="PANTHER" id="PTHR11061">
    <property type="entry name" value="RNA M5U METHYLTRANSFERASE"/>
    <property type="match status" value="1"/>
</dbReference>
<dbReference type="PANTHER" id="PTHR11061:SF30">
    <property type="entry name" value="TRNA (URACIL(54)-C(5))-METHYLTRANSFERASE"/>
    <property type="match status" value="1"/>
</dbReference>
<dbReference type="Pfam" id="PF01938">
    <property type="entry name" value="TRAM"/>
    <property type="match status" value="1"/>
</dbReference>
<dbReference type="Pfam" id="PF05958">
    <property type="entry name" value="tRNA_U5-meth_tr"/>
    <property type="match status" value="1"/>
</dbReference>
<dbReference type="SUPFAM" id="SSF50249">
    <property type="entry name" value="Nucleic acid-binding proteins"/>
    <property type="match status" value="1"/>
</dbReference>
<dbReference type="SUPFAM" id="SSF53335">
    <property type="entry name" value="S-adenosyl-L-methionine-dependent methyltransferases"/>
    <property type="match status" value="1"/>
</dbReference>
<dbReference type="PROSITE" id="PS51687">
    <property type="entry name" value="SAM_MT_RNA_M5U"/>
    <property type="match status" value="1"/>
</dbReference>
<dbReference type="PROSITE" id="PS50926">
    <property type="entry name" value="TRAM"/>
    <property type="match status" value="1"/>
</dbReference>
<dbReference type="PROSITE" id="PS01230">
    <property type="entry name" value="TRMA_1"/>
    <property type="match status" value="1"/>
</dbReference>
<dbReference type="PROSITE" id="PS01231">
    <property type="entry name" value="TRMA_2"/>
    <property type="match status" value="1"/>
</dbReference>
<comment type="similarity">
    <text evidence="3">Belongs to the class I-like SAM-binding methyltransferase superfamily. RNA M5U methyltransferase family.</text>
</comment>
<keyword id="KW-0004">4Fe-4S</keyword>
<keyword id="KW-0408">Iron</keyword>
<keyword id="KW-0411">Iron-sulfur</keyword>
<keyword id="KW-0479">Metal-binding</keyword>
<keyword id="KW-0489">Methyltransferase</keyword>
<keyword id="KW-1185">Reference proteome</keyword>
<keyword id="KW-0949">S-adenosyl-L-methionine</keyword>
<keyword id="KW-0808">Transferase</keyword>
<organism>
    <name type="scientific">Bacteroides thetaiotaomicron (strain ATCC 29148 / DSM 2079 / JCM 5827 / CCUG 10774 / NCTC 10582 / VPI-5482 / E50)</name>
    <dbReference type="NCBI Taxonomy" id="226186"/>
    <lineage>
        <taxon>Bacteria</taxon>
        <taxon>Pseudomonadati</taxon>
        <taxon>Bacteroidota</taxon>
        <taxon>Bacteroidia</taxon>
        <taxon>Bacteroidales</taxon>
        <taxon>Bacteroidaceae</taxon>
        <taxon>Bacteroides</taxon>
    </lineage>
</organism>
<protein>
    <recommendedName>
        <fullName>Uncharacterized RNA methyltransferase BT_0643</fullName>
        <ecNumber>2.1.1.-</ecNumber>
    </recommendedName>
</protein>
<name>Y643_BACTN</name>
<gene>
    <name type="ordered locus">BT_0643</name>
</gene>
<sequence length="454" mass="52201">MAAEGKAIAKVNDLVIFVPYVVPGDVVDLQIKRKKNKYAEAEAVKFHELSPVRAVPFCQHYGVCGGCKWQVLPYSEQIRYKQKQVEDNLRRIGKIELPEISPILGSAKTEFYRNKLEFTFSNKRWLTNDEVRQDVKYDQMNAVGFHIPGAFDKVLAIEKCWLQDDISNRIRNAVRDYAYEHDYSFINLRTQEGMLRNLIIRTSSTGELMVIVICKITEDHEMELFKQLLQFIADSFPEITSLLYIINNKCNDTINDLDVHVFKGKDHMFEEMEGLRFKVGPKSFYQTNSEQAYNLYKIAREFAGLTGKELVYDLYTGTGTIANFVSRQARQVIGIEYVPEAIEDAKVNAEINEIKNALFYAGDMKDMLTQEFINQHGRPDVIITDPPRAGMHQDVVDVILFAEPKRIVYVSCNPATQARDLQLLDGKYKVKAVQPVDMFPHTHHVENVVLLELR</sequence>